<comment type="function">
    <text evidence="1">Catalyzes the phosphorylation of the hydroxyl group of 4-methyl-5-beta-hydroxyethylthiazole (THZ).</text>
</comment>
<comment type="catalytic activity">
    <reaction evidence="1">
        <text>5-(2-hydroxyethyl)-4-methylthiazole + ATP = 4-methyl-5-(2-phosphooxyethyl)-thiazole + ADP + H(+)</text>
        <dbReference type="Rhea" id="RHEA:24212"/>
        <dbReference type="ChEBI" id="CHEBI:15378"/>
        <dbReference type="ChEBI" id="CHEBI:17957"/>
        <dbReference type="ChEBI" id="CHEBI:30616"/>
        <dbReference type="ChEBI" id="CHEBI:58296"/>
        <dbReference type="ChEBI" id="CHEBI:456216"/>
        <dbReference type="EC" id="2.7.1.50"/>
    </reaction>
</comment>
<comment type="cofactor">
    <cofactor evidence="1">
        <name>Mg(2+)</name>
        <dbReference type="ChEBI" id="CHEBI:18420"/>
    </cofactor>
</comment>
<comment type="pathway">
    <text evidence="1">Cofactor biosynthesis; thiamine diphosphate biosynthesis; 4-methyl-5-(2-phosphoethyl)-thiazole from 5-(2-hydroxyethyl)-4-methylthiazole: step 1/1.</text>
</comment>
<comment type="similarity">
    <text evidence="1">Belongs to the Thz kinase family.</text>
</comment>
<feature type="chain" id="PRO_1000198128" description="Hydroxyethylthiazole kinase">
    <location>
        <begin position="1"/>
        <end position="262"/>
    </location>
</feature>
<feature type="binding site" evidence="1">
    <location>
        <position position="43"/>
    </location>
    <ligand>
        <name>substrate</name>
    </ligand>
</feature>
<feature type="binding site" evidence="1">
    <location>
        <position position="118"/>
    </location>
    <ligand>
        <name>ATP</name>
        <dbReference type="ChEBI" id="CHEBI:30616"/>
    </ligand>
</feature>
<feature type="binding site" evidence="1">
    <location>
        <position position="164"/>
    </location>
    <ligand>
        <name>ATP</name>
        <dbReference type="ChEBI" id="CHEBI:30616"/>
    </ligand>
</feature>
<feature type="binding site" evidence="1">
    <location>
        <position position="191"/>
    </location>
    <ligand>
        <name>substrate</name>
    </ligand>
</feature>
<name>THIM_CERSK</name>
<keyword id="KW-0067">ATP-binding</keyword>
<keyword id="KW-0418">Kinase</keyword>
<keyword id="KW-0460">Magnesium</keyword>
<keyword id="KW-0479">Metal-binding</keyword>
<keyword id="KW-0547">Nucleotide-binding</keyword>
<keyword id="KW-0784">Thiamine biosynthesis</keyword>
<keyword id="KW-0808">Transferase</keyword>
<dbReference type="EC" id="2.7.1.50" evidence="1"/>
<dbReference type="EMBL" id="CP001150">
    <property type="protein sequence ID" value="ACM01866.1"/>
    <property type="molecule type" value="Genomic_DNA"/>
</dbReference>
<dbReference type="RefSeq" id="WP_015921128.1">
    <property type="nucleotide sequence ID" value="NC_011963.1"/>
</dbReference>
<dbReference type="SMR" id="B9KL69"/>
<dbReference type="GeneID" id="67447397"/>
<dbReference type="KEGG" id="rsk:RSKD131_2006"/>
<dbReference type="HOGENOM" id="CLU_019943_0_1_5"/>
<dbReference type="UniPathway" id="UPA00060">
    <property type="reaction ID" value="UER00139"/>
</dbReference>
<dbReference type="GO" id="GO:0005524">
    <property type="term" value="F:ATP binding"/>
    <property type="evidence" value="ECO:0007669"/>
    <property type="project" value="UniProtKB-UniRule"/>
</dbReference>
<dbReference type="GO" id="GO:0004417">
    <property type="term" value="F:hydroxyethylthiazole kinase activity"/>
    <property type="evidence" value="ECO:0007669"/>
    <property type="project" value="UniProtKB-UniRule"/>
</dbReference>
<dbReference type="GO" id="GO:0000287">
    <property type="term" value="F:magnesium ion binding"/>
    <property type="evidence" value="ECO:0007669"/>
    <property type="project" value="UniProtKB-UniRule"/>
</dbReference>
<dbReference type="GO" id="GO:0009228">
    <property type="term" value="P:thiamine biosynthetic process"/>
    <property type="evidence" value="ECO:0007669"/>
    <property type="project" value="UniProtKB-KW"/>
</dbReference>
<dbReference type="GO" id="GO:0009229">
    <property type="term" value="P:thiamine diphosphate biosynthetic process"/>
    <property type="evidence" value="ECO:0007669"/>
    <property type="project" value="UniProtKB-UniRule"/>
</dbReference>
<dbReference type="CDD" id="cd01170">
    <property type="entry name" value="THZ_kinase"/>
    <property type="match status" value="1"/>
</dbReference>
<dbReference type="Gene3D" id="3.40.1190.20">
    <property type="match status" value="1"/>
</dbReference>
<dbReference type="HAMAP" id="MF_00228">
    <property type="entry name" value="Thz_kinase"/>
    <property type="match status" value="1"/>
</dbReference>
<dbReference type="InterPro" id="IPR000417">
    <property type="entry name" value="Hyethyz_kinase"/>
</dbReference>
<dbReference type="InterPro" id="IPR029056">
    <property type="entry name" value="Ribokinase-like"/>
</dbReference>
<dbReference type="NCBIfam" id="NF006830">
    <property type="entry name" value="PRK09355.1"/>
    <property type="match status" value="1"/>
</dbReference>
<dbReference type="NCBIfam" id="TIGR00694">
    <property type="entry name" value="thiM"/>
    <property type="match status" value="1"/>
</dbReference>
<dbReference type="Pfam" id="PF02110">
    <property type="entry name" value="HK"/>
    <property type="match status" value="1"/>
</dbReference>
<dbReference type="PIRSF" id="PIRSF000513">
    <property type="entry name" value="Thz_kinase"/>
    <property type="match status" value="1"/>
</dbReference>
<dbReference type="PRINTS" id="PR01099">
    <property type="entry name" value="HYETHTZKNASE"/>
</dbReference>
<dbReference type="SUPFAM" id="SSF53613">
    <property type="entry name" value="Ribokinase-like"/>
    <property type="match status" value="1"/>
</dbReference>
<accession>B9KL69</accession>
<sequence>MDGCGTYLDTMRREAPLVQCITNFVAMNVVANVLLAAGASPAMVHDAEESGEFAAIAQALTINMGTPSPRWVEGMEAAARGATAAGRPWVLDPVAVGATAFRRGLGARLLALKPTVIRGNASEILALAGAETRGKGADSADPVAAAEAAAQRLAESSGAVVAVTGPVDFVTDGRRGIRCANGHPLMPRVTALGCSLTGIVGAFAAIRPPFEATAAALAFFGLAGEEAAKTATGPGSFQVAFLDALHALSPEALDRGARLEAA</sequence>
<proteinExistence type="inferred from homology"/>
<evidence type="ECO:0000255" key="1">
    <source>
        <dbReference type="HAMAP-Rule" id="MF_00228"/>
    </source>
</evidence>
<gene>
    <name evidence="1" type="primary">thiM</name>
    <name type="ordered locus">RSKD131_2006</name>
</gene>
<reference key="1">
    <citation type="journal article" date="2009" name="J. Bacteriol.">
        <title>Complete genome sequence of Rhodobacter sphaeroides KD131.</title>
        <authorList>
            <person name="Lim S.-K."/>
            <person name="Kim S.J."/>
            <person name="Cha S.H."/>
            <person name="Oh Y.-K."/>
            <person name="Rhee H.-J."/>
            <person name="Kim M.-S."/>
            <person name="Lee J.K."/>
        </authorList>
    </citation>
    <scope>NUCLEOTIDE SEQUENCE [LARGE SCALE GENOMIC DNA]</scope>
    <source>
        <strain>KD131 / KCTC 12085</strain>
    </source>
</reference>
<organism>
    <name type="scientific">Cereibacter sphaeroides (strain KD131 / KCTC 12085)</name>
    <name type="common">Rhodobacter sphaeroides</name>
    <dbReference type="NCBI Taxonomy" id="557760"/>
    <lineage>
        <taxon>Bacteria</taxon>
        <taxon>Pseudomonadati</taxon>
        <taxon>Pseudomonadota</taxon>
        <taxon>Alphaproteobacteria</taxon>
        <taxon>Rhodobacterales</taxon>
        <taxon>Paracoccaceae</taxon>
        <taxon>Cereibacter</taxon>
    </lineage>
</organism>
<protein>
    <recommendedName>
        <fullName evidence="1">Hydroxyethylthiazole kinase</fullName>
        <ecNumber evidence="1">2.7.1.50</ecNumber>
    </recommendedName>
    <alternativeName>
        <fullName evidence="1">4-methyl-5-beta-hydroxyethylthiazole kinase</fullName>
        <shortName evidence="1">TH kinase</shortName>
        <shortName evidence="1">Thz kinase</shortName>
    </alternativeName>
</protein>